<proteinExistence type="inferred from homology"/>
<gene>
    <name evidence="1" type="primary">serS</name>
    <name type="ordered locus">Minf_1723</name>
</gene>
<reference key="1">
    <citation type="journal article" date="2008" name="Biol. Direct">
        <title>Complete genome sequence of the extremely acidophilic methanotroph isolate V4, Methylacidiphilum infernorum, a representative of the bacterial phylum Verrucomicrobia.</title>
        <authorList>
            <person name="Hou S."/>
            <person name="Makarova K.S."/>
            <person name="Saw J.H."/>
            <person name="Senin P."/>
            <person name="Ly B.V."/>
            <person name="Zhou Z."/>
            <person name="Ren Y."/>
            <person name="Wang J."/>
            <person name="Galperin M.Y."/>
            <person name="Omelchenko M.V."/>
            <person name="Wolf Y.I."/>
            <person name="Yutin N."/>
            <person name="Koonin E.V."/>
            <person name="Stott M.B."/>
            <person name="Mountain B.W."/>
            <person name="Crowe M.A."/>
            <person name="Smirnova A.V."/>
            <person name="Dunfield P.F."/>
            <person name="Feng L."/>
            <person name="Wang L."/>
            <person name="Alam M."/>
        </authorList>
    </citation>
    <scope>NUCLEOTIDE SEQUENCE [LARGE SCALE GENOMIC DNA]</scope>
    <source>
        <strain>Isolate V4</strain>
    </source>
</reference>
<evidence type="ECO:0000255" key="1">
    <source>
        <dbReference type="HAMAP-Rule" id="MF_00176"/>
    </source>
</evidence>
<comment type="function">
    <text evidence="1">Catalyzes the attachment of serine to tRNA(Ser). Is also able to aminoacylate tRNA(Sec) with serine, to form the misacylated tRNA L-seryl-tRNA(Sec), which will be further converted into selenocysteinyl-tRNA(Sec).</text>
</comment>
<comment type="catalytic activity">
    <reaction evidence="1">
        <text>tRNA(Ser) + L-serine + ATP = L-seryl-tRNA(Ser) + AMP + diphosphate + H(+)</text>
        <dbReference type="Rhea" id="RHEA:12292"/>
        <dbReference type="Rhea" id="RHEA-COMP:9669"/>
        <dbReference type="Rhea" id="RHEA-COMP:9703"/>
        <dbReference type="ChEBI" id="CHEBI:15378"/>
        <dbReference type="ChEBI" id="CHEBI:30616"/>
        <dbReference type="ChEBI" id="CHEBI:33019"/>
        <dbReference type="ChEBI" id="CHEBI:33384"/>
        <dbReference type="ChEBI" id="CHEBI:78442"/>
        <dbReference type="ChEBI" id="CHEBI:78533"/>
        <dbReference type="ChEBI" id="CHEBI:456215"/>
        <dbReference type="EC" id="6.1.1.11"/>
    </reaction>
</comment>
<comment type="catalytic activity">
    <reaction evidence="1">
        <text>tRNA(Sec) + L-serine + ATP = L-seryl-tRNA(Sec) + AMP + diphosphate + H(+)</text>
        <dbReference type="Rhea" id="RHEA:42580"/>
        <dbReference type="Rhea" id="RHEA-COMP:9742"/>
        <dbReference type="Rhea" id="RHEA-COMP:10128"/>
        <dbReference type="ChEBI" id="CHEBI:15378"/>
        <dbReference type="ChEBI" id="CHEBI:30616"/>
        <dbReference type="ChEBI" id="CHEBI:33019"/>
        <dbReference type="ChEBI" id="CHEBI:33384"/>
        <dbReference type="ChEBI" id="CHEBI:78442"/>
        <dbReference type="ChEBI" id="CHEBI:78533"/>
        <dbReference type="ChEBI" id="CHEBI:456215"/>
        <dbReference type="EC" id="6.1.1.11"/>
    </reaction>
</comment>
<comment type="pathway">
    <text evidence="1">Aminoacyl-tRNA biosynthesis; selenocysteinyl-tRNA(Sec) biosynthesis; L-seryl-tRNA(Sec) from L-serine and tRNA(Sec): step 1/1.</text>
</comment>
<comment type="subunit">
    <text evidence="1">Homodimer. The tRNA molecule binds across the dimer.</text>
</comment>
<comment type="subcellular location">
    <subcellularLocation>
        <location evidence="1">Cytoplasm</location>
    </subcellularLocation>
</comment>
<comment type="domain">
    <text evidence="1">Consists of two distinct domains, a catalytic core and a N-terminal extension that is involved in tRNA binding.</text>
</comment>
<comment type="similarity">
    <text evidence="1">Belongs to the class-II aminoacyl-tRNA synthetase family. Type-1 seryl-tRNA synthetase subfamily.</text>
</comment>
<dbReference type="EC" id="6.1.1.11" evidence="1"/>
<dbReference type="EMBL" id="CP000975">
    <property type="protein sequence ID" value="ACD83777.1"/>
    <property type="molecule type" value="Genomic_DNA"/>
</dbReference>
<dbReference type="RefSeq" id="WP_012464059.1">
    <property type="nucleotide sequence ID" value="NC_010794.1"/>
</dbReference>
<dbReference type="SMR" id="B3DX68"/>
<dbReference type="STRING" id="481448.Minf_1723"/>
<dbReference type="KEGG" id="min:Minf_1723"/>
<dbReference type="eggNOG" id="COG0172">
    <property type="taxonomic scope" value="Bacteria"/>
</dbReference>
<dbReference type="HOGENOM" id="CLU_023797_1_1_0"/>
<dbReference type="OrthoDB" id="9804647at2"/>
<dbReference type="UniPathway" id="UPA00906">
    <property type="reaction ID" value="UER00895"/>
</dbReference>
<dbReference type="Proteomes" id="UP000009149">
    <property type="component" value="Chromosome"/>
</dbReference>
<dbReference type="GO" id="GO:0005737">
    <property type="term" value="C:cytoplasm"/>
    <property type="evidence" value="ECO:0007669"/>
    <property type="project" value="UniProtKB-SubCell"/>
</dbReference>
<dbReference type="GO" id="GO:0005524">
    <property type="term" value="F:ATP binding"/>
    <property type="evidence" value="ECO:0007669"/>
    <property type="project" value="UniProtKB-UniRule"/>
</dbReference>
<dbReference type="GO" id="GO:0004828">
    <property type="term" value="F:serine-tRNA ligase activity"/>
    <property type="evidence" value="ECO:0007669"/>
    <property type="project" value="UniProtKB-UniRule"/>
</dbReference>
<dbReference type="GO" id="GO:0016260">
    <property type="term" value="P:selenocysteine biosynthetic process"/>
    <property type="evidence" value="ECO:0007669"/>
    <property type="project" value="UniProtKB-UniRule"/>
</dbReference>
<dbReference type="GO" id="GO:0006434">
    <property type="term" value="P:seryl-tRNA aminoacylation"/>
    <property type="evidence" value="ECO:0007669"/>
    <property type="project" value="UniProtKB-UniRule"/>
</dbReference>
<dbReference type="CDD" id="cd00770">
    <property type="entry name" value="SerRS_core"/>
    <property type="match status" value="1"/>
</dbReference>
<dbReference type="Gene3D" id="3.30.930.10">
    <property type="entry name" value="Bira Bifunctional Protein, Domain 2"/>
    <property type="match status" value="1"/>
</dbReference>
<dbReference type="Gene3D" id="1.10.287.40">
    <property type="entry name" value="Serine-tRNA synthetase, tRNA binding domain"/>
    <property type="match status" value="1"/>
</dbReference>
<dbReference type="HAMAP" id="MF_00176">
    <property type="entry name" value="Ser_tRNA_synth_type1"/>
    <property type="match status" value="1"/>
</dbReference>
<dbReference type="InterPro" id="IPR002314">
    <property type="entry name" value="aa-tRNA-synt_IIb"/>
</dbReference>
<dbReference type="InterPro" id="IPR006195">
    <property type="entry name" value="aa-tRNA-synth_II"/>
</dbReference>
<dbReference type="InterPro" id="IPR045864">
    <property type="entry name" value="aa-tRNA-synth_II/BPL/LPL"/>
</dbReference>
<dbReference type="InterPro" id="IPR002317">
    <property type="entry name" value="Ser-tRNA-ligase_type_1"/>
</dbReference>
<dbReference type="InterPro" id="IPR015866">
    <property type="entry name" value="Ser-tRNA-synth_1_N"/>
</dbReference>
<dbReference type="InterPro" id="IPR042103">
    <property type="entry name" value="SerRS_1_N_sf"/>
</dbReference>
<dbReference type="InterPro" id="IPR033729">
    <property type="entry name" value="SerRS_core"/>
</dbReference>
<dbReference type="InterPro" id="IPR010978">
    <property type="entry name" value="tRNA-bd_arm"/>
</dbReference>
<dbReference type="NCBIfam" id="TIGR00414">
    <property type="entry name" value="serS"/>
    <property type="match status" value="1"/>
</dbReference>
<dbReference type="PANTHER" id="PTHR43697:SF1">
    <property type="entry name" value="SERINE--TRNA LIGASE"/>
    <property type="match status" value="1"/>
</dbReference>
<dbReference type="PANTHER" id="PTHR43697">
    <property type="entry name" value="SERYL-TRNA SYNTHETASE"/>
    <property type="match status" value="1"/>
</dbReference>
<dbReference type="Pfam" id="PF02403">
    <property type="entry name" value="Seryl_tRNA_N"/>
    <property type="match status" value="1"/>
</dbReference>
<dbReference type="Pfam" id="PF00587">
    <property type="entry name" value="tRNA-synt_2b"/>
    <property type="match status" value="1"/>
</dbReference>
<dbReference type="PIRSF" id="PIRSF001529">
    <property type="entry name" value="Ser-tRNA-synth_IIa"/>
    <property type="match status" value="1"/>
</dbReference>
<dbReference type="PRINTS" id="PR00981">
    <property type="entry name" value="TRNASYNTHSER"/>
</dbReference>
<dbReference type="SUPFAM" id="SSF55681">
    <property type="entry name" value="Class II aaRS and biotin synthetases"/>
    <property type="match status" value="1"/>
</dbReference>
<dbReference type="SUPFAM" id="SSF46589">
    <property type="entry name" value="tRNA-binding arm"/>
    <property type="match status" value="1"/>
</dbReference>
<dbReference type="PROSITE" id="PS50862">
    <property type="entry name" value="AA_TRNA_LIGASE_II"/>
    <property type="match status" value="1"/>
</dbReference>
<keyword id="KW-0030">Aminoacyl-tRNA synthetase</keyword>
<keyword id="KW-0067">ATP-binding</keyword>
<keyword id="KW-0963">Cytoplasm</keyword>
<keyword id="KW-0436">Ligase</keyword>
<keyword id="KW-0547">Nucleotide-binding</keyword>
<keyword id="KW-0648">Protein biosynthesis</keyword>
<feature type="chain" id="PRO_1000098092" description="Serine--tRNA ligase">
    <location>
        <begin position="1"/>
        <end position="421"/>
    </location>
</feature>
<feature type="binding site" evidence="1">
    <location>
        <begin position="231"/>
        <end position="233"/>
    </location>
    <ligand>
        <name>L-serine</name>
        <dbReference type="ChEBI" id="CHEBI:33384"/>
    </ligand>
</feature>
<feature type="binding site" evidence="1">
    <location>
        <begin position="262"/>
        <end position="264"/>
    </location>
    <ligand>
        <name>ATP</name>
        <dbReference type="ChEBI" id="CHEBI:30616"/>
    </ligand>
</feature>
<feature type="binding site" evidence="1">
    <location>
        <position position="285"/>
    </location>
    <ligand>
        <name>L-serine</name>
        <dbReference type="ChEBI" id="CHEBI:33384"/>
    </ligand>
</feature>
<feature type="binding site" evidence="1">
    <location>
        <begin position="349"/>
        <end position="352"/>
    </location>
    <ligand>
        <name>ATP</name>
        <dbReference type="ChEBI" id="CHEBI:30616"/>
    </ligand>
</feature>
<feature type="binding site" evidence="1">
    <location>
        <position position="384"/>
    </location>
    <ligand>
        <name>L-serine</name>
        <dbReference type="ChEBI" id="CHEBI:33384"/>
    </ligand>
</feature>
<name>SYS_METI4</name>
<organism>
    <name type="scientific">Methylacidiphilum infernorum (isolate V4)</name>
    <name type="common">Methylokorus infernorum (strain V4)</name>
    <dbReference type="NCBI Taxonomy" id="481448"/>
    <lineage>
        <taxon>Bacteria</taxon>
        <taxon>Pseudomonadati</taxon>
        <taxon>Verrucomicrobiota</taxon>
        <taxon>Methylacidiphilae</taxon>
        <taxon>Methylacidiphilales</taxon>
        <taxon>Methylacidiphilaceae</taxon>
        <taxon>Methylacidiphilum (ex Ratnadevi et al. 2023)</taxon>
    </lineage>
</organism>
<protein>
    <recommendedName>
        <fullName evidence="1">Serine--tRNA ligase</fullName>
        <ecNumber evidence="1">6.1.1.11</ecNumber>
    </recommendedName>
    <alternativeName>
        <fullName evidence="1">Seryl-tRNA synthetase</fullName>
        <shortName evidence="1">SerRS</shortName>
    </alternativeName>
    <alternativeName>
        <fullName evidence="1">Seryl-tRNA(Ser/Sec) synthetase</fullName>
    </alternativeName>
</protein>
<accession>B3DX68</accession>
<sequence length="421" mass="48046">MLDIQLIRHNLAQTKQKLALRSKGLETLLDHIFELDFKKRSLQSEIEKYRALRNKQSKEIGLKKIKGENVEGQFSELKKMGSRIEEMEKELIQFENQINTLLLSLPNIPHDSVPTGGPEANKVVKTWGEPRQANFPLKTHWELGRELGILDLERGAKLSGSGFSLFTGNGAKLQRALIQFMLTIHTEEHGYKELWPPYLVTEDCMRGTGHLPKFALDMYATDKDNLYLIPTGEVPLTNFHRDEILAESSLPLRYVAYTPCFRREAGSAGKDTRGLLRLHQFDKVELVQITKPENSYTALEEMVSHAENILRSLNLCYRVVLLASQDMGFGAAKCYDLEVWSPGIQSWLEVSSVSNMENFQSRRMNLRYKSSSGKNILCHTLNGSGTALPRLVAAILENYQKEDGRVLIPEKIRTYFKEEYL</sequence>